<protein>
    <recommendedName>
        <fullName evidence="1">Peptidyl-tRNA hydrolase</fullName>
        <shortName evidence="1">Pth</shortName>
        <ecNumber evidence="1">3.1.1.29</ecNumber>
    </recommendedName>
</protein>
<organism>
    <name type="scientific">Mycoplasma mycoides subsp. mycoides SC (strain CCUG 32753 / NCTC 10114 / PG1)</name>
    <dbReference type="NCBI Taxonomy" id="272632"/>
    <lineage>
        <taxon>Bacteria</taxon>
        <taxon>Bacillati</taxon>
        <taxon>Mycoplasmatota</taxon>
        <taxon>Mollicutes</taxon>
        <taxon>Mycoplasmataceae</taxon>
        <taxon>Mycoplasma</taxon>
    </lineage>
</organism>
<evidence type="ECO:0000255" key="1">
    <source>
        <dbReference type="HAMAP-Rule" id="MF_00083"/>
    </source>
</evidence>
<reference key="1">
    <citation type="journal article" date="2004" name="Genome Res.">
        <title>The genome sequence of Mycoplasma mycoides subsp. mycoides SC type strain PG1T, the causative agent of contagious bovine pleuropneumonia (CBPP).</title>
        <authorList>
            <person name="Westberg J."/>
            <person name="Persson A."/>
            <person name="Holmberg A."/>
            <person name="Goesmann A."/>
            <person name="Lundeberg J."/>
            <person name="Johansson K.-E."/>
            <person name="Pettersson B."/>
            <person name="Uhlen M."/>
        </authorList>
    </citation>
    <scope>NUCLEOTIDE SEQUENCE [LARGE SCALE GENOMIC DNA]</scope>
    <source>
        <strain>CCUG 32753 / NCTC 10114 / PG1</strain>
    </source>
</reference>
<feature type="chain" id="PRO_0000187774" description="Peptidyl-tRNA hydrolase">
    <location>
        <begin position="1"/>
        <end position="186"/>
    </location>
</feature>
<feature type="active site" description="Proton acceptor" evidence="1">
    <location>
        <position position="19"/>
    </location>
</feature>
<feature type="binding site" evidence="1">
    <location>
        <position position="14"/>
    </location>
    <ligand>
        <name>tRNA</name>
        <dbReference type="ChEBI" id="CHEBI:17843"/>
    </ligand>
</feature>
<feature type="binding site" evidence="1">
    <location>
        <position position="64"/>
    </location>
    <ligand>
        <name>tRNA</name>
        <dbReference type="ChEBI" id="CHEBI:17843"/>
    </ligand>
</feature>
<feature type="binding site" evidence="1">
    <location>
        <position position="66"/>
    </location>
    <ligand>
        <name>tRNA</name>
        <dbReference type="ChEBI" id="CHEBI:17843"/>
    </ligand>
</feature>
<feature type="binding site" evidence="1">
    <location>
        <position position="112"/>
    </location>
    <ligand>
        <name>tRNA</name>
        <dbReference type="ChEBI" id="CHEBI:17843"/>
    </ligand>
</feature>
<feature type="site" description="Discriminates between blocked and unblocked aminoacyl-tRNA" evidence="1">
    <location>
        <position position="9"/>
    </location>
</feature>
<feature type="site" description="Stabilizes the basic form of H active site to accept a proton" evidence="1">
    <location>
        <position position="91"/>
    </location>
</feature>
<keyword id="KW-0963">Cytoplasm</keyword>
<keyword id="KW-0378">Hydrolase</keyword>
<keyword id="KW-1185">Reference proteome</keyword>
<keyword id="KW-0694">RNA-binding</keyword>
<keyword id="KW-0820">tRNA-binding</keyword>
<gene>
    <name evidence="1" type="primary">pth</name>
    <name type="ordered locus">MSC_0954</name>
</gene>
<proteinExistence type="inferred from homology"/>
<accession>Q6MS28</accession>
<sequence length="186" mass="21698">MKVIIGLGNIGKEYEKTRHNAGFIAIDLLLEKYNYSSVKQEFNSLIYTTIINNQKVLLVKPLTFMNNSGLAVRQIINFYKINLNDLIIIHDDKDLNISRIQFKKDGSSAGHNGIKSIINNLQTQNFYRLRIGVNQVPKEWKIVDWVLSKFSDEELNLLKQSFIDKIEFINDFTNNKTFIYLMNKYN</sequence>
<dbReference type="EC" id="3.1.1.29" evidence="1"/>
<dbReference type="EMBL" id="BX293980">
    <property type="protein sequence ID" value="CAE77563.1"/>
    <property type="molecule type" value="Genomic_DNA"/>
</dbReference>
<dbReference type="RefSeq" id="NP_975921.1">
    <property type="nucleotide sequence ID" value="NC_005364.2"/>
</dbReference>
<dbReference type="RefSeq" id="WP_011167103.1">
    <property type="nucleotide sequence ID" value="NC_005364.2"/>
</dbReference>
<dbReference type="SMR" id="Q6MS28"/>
<dbReference type="STRING" id="272632.MSC_0954"/>
<dbReference type="KEGG" id="mmy:MSC_0954"/>
<dbReference type="PATRIC" id="fig|272632.4.peg.1037"/>
<dbReference type="eggNOG" id="COG0193">
    <property type="taxonomic scope" value="Bacteria"/>
</dbReference>
<dbReference type="HOGENOM" id="CLU_062456_4_1_14"/>
<dbReference type="Proteomes" id="UP000001016">
    <property type="component" value="Chromosome"/>
</dbReference>
<dbReference type="GO" id="GO:0005737">
    <property type="term" value="C:cytoplasm"/>
    <property type="evidence" value="ECO:0007669"/>
    <property type="project" value="UniProtKB-SubCell"/>
</dbReference>
<dbReference type="GO" id="GO:0004045">
    <property type="term" value="F:peptidyl-tRNA hydrolase activity"/>
    <property type="evidence" value="ECO:0007669"/>
    <property type="project" value="UniProtKB-UniRule"/>
</dbReference>
<dbReference type="GO" id="GO:0000049">
    <property type="term" value="F:tRNA binding"/>
    <property type="evidence" value="ECO:0007669"/>
    <property type="project" value="UniProtKB-UniRule"/>
</dbReference>
<dbReference type="GO" id="GO:0006515">
    <property type="term" value="P:protein quality control for misfolded or incompletely synthesized proteins"/>
    <property type="evidence" value="ECO:0007669"/>
    <property type="project" value="UniProtKB-UniRule"/>
</dbReference>
<dbReference type="GO" id="GO:0072344">
    <property type="term" value="P:rescue of stalled ribosome"/>
    <property type="evidence" value="ECO:0007669"/>
    <property type="project" value="UniProtKB-UniRule"/>
</dbReference>
<dbReference type="CDD" id="cd00462">
    <property type="entry name" value="PTH"/>
    <property type="match status" value="1"/>
</dbReference>
<dbReference type="FunFam" id="3.40.50.1470:FF:000001">
    <property type="entry name" value="Peptidyl-tRNA hydrolase"/>
    <property type="match status" value="1"/>
</dbReference>
<dbReference type="Gene3D" id="3.40.50.1470">
    <property type="entry name" value="Peptidyl-tRNA hydrolase"/>
    <property type="match status" value="1"/>
</dbReference>
<dbReference type="HAMAP" id="MF_00083">
    <property type="entry name" value="Pept_tRNA_hydro_bact"/>
    <property type="match status" value="1"/>
</dbReference>
<dbReference type="InterPro" id="IPR001328">
    <property type="entry name" value="Pept_tRNA_hydro"/>
</dbReference>
<dbReference type="InterPro" id="IPR018171">
    <property type="entry name" value="Pept_tRNA_hydro_CS"/>
</dbReference>
<dbReference type="InterPro" id="IPR036416">
    <property type="entry name" value="Pept_tRNA_hydro_sf"/>
</dbReference>
<dbReference type="NCBIfam" id="TIGR00447">
    <property type="entry name" value="pth"/>
    <property type="match status" value="1"/>
</dbReference>
<dbReference type="PANTHER" id="PTHR17224">
    <property type="entry name" value="PEPTIDYL-TRNA HYDROLASE"/>
    <property type="match status" value="1"/>
</dbReference>
<dbReference type="PANTHER" id="PTHR17224:SF1">
    <property type="entry name" value="PEPTIDYL-TRNA HYDROLASE"/>
    <property type="match status" value="1"/>
</dbReference>
<dbReference type="Pfam" id="PF01195">
    <property type="entry name" value="Pept_tRNA_hydro"/>
    <property type="match status" value="1"/>
</dbReference>
<dbReference type="SUPFAM" id="SSF53178">
    <property type="entry name" value="Peptidyl-tRNA hydrolase-like"/>
    <property type="match status" value="1"/>
</dbReference>
<dbReference type="PROSITE" id="PS01195">
    <property type="entry name" value="PEPT_TRNA_HYDROL_1"/>
    <property type="match status" value="1"/>
</dbReference>
<dbReference type="PROSITE" id="PS01196">
    <property type="entry name" value="PEPT_TRNA_HYDROL_2"/>
    <property type="match status" value="1"/>
</dbReference>
<comment type="function">
    <text evidence="1">Hydrolyzes ribosome-free peptidyl-tRNAs (with 1 or more amino acids incorporated), which drop off the ribosome during protein synthesis, or as a result of ribosome stalling.</text>
</comment>
<comment type="function">
    <text evidence="1">Catalyzes the release of premature peptidyl moieties from peptidyl-tRNA molecules trapped in stalled 50S ribosomal subunits, and thus maintains levels of free tRNAs and 50S ribosomes.</text>
</comment>
<comment type="catalytic activity">
    <reaction evidence="1">
        <text>an N-acyl-L-alpha-aminoacyl-tRNA + H2O = an N-acyl-L-amino acid + a tRNA + H(+)</text>
        <dbReference type="Rhea" id="RHEA:54448"/>
        <dbReference type="Rhea" id="RHEA-COMP:10123"/>
        <dbReference type="Rhea" id="RHEA-COMP:13883"/>
        <dbReference type="ChEBI" id="CHEBI:15377"/>
        <dbReference type="ChEBI" id="CHEBI:15378"/>
        <dbReference type="ChEBI" id="CHEBI:59874"/>
        <dbReference type="ChEBI" id="CHEBI:78442"/>
        <dbReference type="ChEBI" id="CHEBI:138191"/>
        <dbReference type="EC" id="3.1.1.29"/>
    </reaction>
</comment>
<comment type="subunit">
    <text evidence="1">Monomer.</text>
</comment>
<comment type="subcellular location">
    <subcellularLocation>
        <location evidence="1">Cytoplasm</location>
    </subcellularLocation>
</comment>
<comment type="similarity">
    <text evidence="1">Belongs to the PTH family.</text>
</comment>
<name>PTH_MYCMS</name>